<evidence type="ECO:0000250" key="1"/>
<evidence type="ECO:0000305" key="2"/>
<organism>
    <name type="scientific">Deinococcus radiodurans (strain ATCC 13939 / DSM 20539 / JCM 16871 / CCUG 27074 / LMG 4051 / NBRC 15346 / NCIMB 9279 / VKM B-1422 / R1)</name>
    <dbReference type="NCBI Taxonomy" id="243230"/>
    <lineage>
        <taxon>Bacteria</taxon>
        <taxon>Thermotogati</taxon>
        <taxon>Deinococcota</taxon>
        <taxon>Deinococci</taxon>
        <taxon>Deinococcales</taxon>
        <taxon>Deinococcaceae</taxon>
        <taxon>Deinococcus</taxon>
    </lineage>
</organism>
<accession>Q9RRB7</accession>
<comment type="catalytic activity">
    <reaction>
        <text>diphosphate + H2O = 2 phosphate + H(+)</text>
        <dbReference type="Rhea" id="RHEA:24576"/>
        <dbReference type="ChEBI" id="CHEBI:15377"/>
        <dbReference type="ChEBI" id="CHEBI:15378"/>
        <dbReference type="ChEBI" id="CHEBI:33019"/>
        <dbReference type="ChEBI" id="CHEBI:43474"/>
        <dbReference type="EC" id="3.6.1.1"/>
    </reaction>
</comment>
<comment type="cofactor">
    <cofactor evidence="1">
        <name>Mn(2+)</name>
        <dbReference type="ChEBI" id="CHEBI:29035"/>
    </cofactor>
    <text evidence="1">Binds 2 manganese ions per subunit.</text>
</comment>
<comment type="subcellular location">
    <subcellularLocation>
        <location evidence="1">Cytoplasm</location>
    </subcellularLocation>
</comment>
<comment type="miscellaneous">
    <text>On the 2D-gel the determined pI of this protein is: 4.65, its MW is: 32 kDa.</text>
</comment>
<comment type="similarity">
    <text evidence="2">Belongs to the PPase class C family.</text>
</comment>
<proteinExistence type="evidence at protein level"/>
<sequence>MLAVFGHLNPDTDAISAAMVYARLLTRQGTEAQAYRLGEPNFETAYVLRELGLEAPPLLTELPAGSKVALVDHNESAQSLPALGELDVTRVVDHHKLGDLTTINPPYLRFEPVGCTGTILLKLHREAGLSVEPQDAKLMLSAILSDTLHFRSPTTTQDDRDAVAFLAPVAGVNDVEAYALAMFAAKSDLGNTPAETLLRMDYKVFPFGDPVQPQNWGIGVIETTNPAYVFGRQQELLAAMDQVKAEDTLSGMLLSVVDILNETNRTLVLGATEAKVLREAFGAEAEGQVADLGNRISRKKQIVPTLEKYFAPEA</sequence>
<gene>
    <name type="primary">ppaC</name>
    <name type="ordered locus">DR_2576</name>
</gene>
<keyword id="KW-0963">Cytoplasm</keyword>
<keyword id="KW-0903">Direct protein sequencing</keyword>
<keyword id="KW-0378">Hydrolase</keyword>
<keyword id="KW-0464">Manganese</keyword>
<keyword id="KW-0479">Metal-binding</keyword>
<keyword id="KW-1185">Reference proteome</keyword>
<name>PPAC_DEIRA</name>
<feature type="chain" id="PRO_0000158571" description="Probable manganese-dependent inorganic pyrophosphatase">
    <location>
        <begin position="1"/>
        <end position="314"/>
    </location>
</feature>
<feature type="binding site" evidence="1">
    <location>
        <position position="7"/>
    </location>
    <ligand>
        <name>Mn(2+)</name>
        <dbReference type="ChEBI" id="CHEBI:29035"/>
        <label>1</label>
    </ligand>
</feature>
<feature type="binding site" evidence="1">
    <location>
        <position position="11"/>
    </location>
    <ligand>
        <name>Mn(2+)</name>
        <dbReference type="ChEBI" id="CHEBI:29035"/>
        <label>1</label>
    </ligand>
</feature>
<feature type="binding site" evidence="1">
    <location>
        <position position="13"/>
    </location>
    <ligand>
        <name>Mn(2+)</name>
        <dbReference type="ChEBI" id="CHEBI:29035"/>
        <label>2</label>
    </ligand>
</feature>
<feature type="binding site" evidence="1">
    <location>
        <position position="72"/>
    </location>
    <ligand>
        <name>Mn(2+)</name>
        <dbReference type="ChEBI" id="CHEBI:29035"/>
        <label>1</label>
    </ligand>
</feature>
<feature type="binding site" evidence="1">
    <location>
        <position position="72"/>
    </location>
    <ligand>
        <name>Mn(2+)</name>
        <dbReference type="ChEBI" id="CHEBI:29035"/>
        <label>2</label>
    </ligand>
</feature>
<feature type="binding site" evidence="1">
    <location>
        <position position="94"/>
    </location>
    <ligand>
        <name>Mn(2+)</name>
        <dbReference type="ChEBI" id="CHEBI:29035"/>
        <label>2</label>
    </ligand>
</feature>
<feature type="binding site" evidence="1">
    <location>
        <position position="146"/>
    </location>
    <ligand>
        <name>Mn(2+)</name>
        <dbReference type="ChEBI" id="CHEBI:29035"/>
        <label>2</label>
    </ligand>
</feature>
<feature type="sequence conflict" description="In Ref. 2; AA sequence." evidence="2" ref="2">
    <location>
        <position position="15"/>
    </location>
</feature>
<dbReference type="EC" id="3.6.1.1"/>
<dbReference type="EMBL" id="AE000513">
    <property type="protein sequence ID" value="AAF12113.1"/>
    <property type="molecule type" value="Genomic_DNA"/>
</dbReference>
<dbReference type="PIR" id="A75258">
    <property type="entry name" value="A75258"/>
</dbReference>
<dbReference type="RefSeq" id="NP_296296.1">
    <property type="nucleotide sequence ID" value="NC_001263.1"/>
</dbReference>
<dbReference type="RefSeq" id="WP_010889201.1">
    <property type="nucleotide sequence ID" value="NC_001263.1"/>
</dbReference>
<dbReference type="SMR" id="Q9RRB7"/>
<dbReference type="FunCoup" id="Q9RRB7">
    <property type="interactions" value="30"/>
</dbReference>
<dbReference type="STRING" id="243230.DR_2576"/>
<dbReference type="PaxDb" id="243230-DR_2576"/>
<dbReference type="EnsemblBacteria" id="AAF12113">
    <property type="protein sequence ID" value="AAF12113"/>
    <property type="gene ID" value="DR_2576"/>
</dbReference>
<dbReference type="GeneID" id="69518827"/>
<dbReference type="KEGG" id="dra:DR_2576"/>
<dbReference type="PATRIC" id="fig|243230.17.peg.2822"/>
<dbReference type="eggNOG" id="COG1227">
    <property type="taxonomic scope" value="Bacteria"/>
</dbReference>
<dbReference type="HOGENOM" id="CLU_025243_0_1_0"/>
<dbReference type="InParanoid" id="Q9RRB7"/>
<dbReference type="OrthoDB" id="9766150at2"/>
<dbReference type="Proteomes" id="UP000002524">
    <property type="component" value="Chromosome 1"/>
</dbReference>
<dbReference type="GO" id="GO:0005737">
    <property type="term" value="C:cytoplasm"/>
    <property type="evidence" value="ECO:0000318"/>
    <property type="project" value="GO_Central"/>
</dbReference>
<dbReference type="GO" id="GO:0004427">
    <property type="term" value="F:inorganic diphosphate phosphatase activity"/>
    <property type="evidence" value="ECO:0007669"/>
    <property type="project" value="UniProtKB-UniRule"/>
</dbReference>
<dbReference type="GO" id="GO:0030145">
    <property type="term" value="F:manganese ion binding"/>
    <property type="evidence" value="ECO:0007669"/>
    <property type="project" value="UniProtKB-UniRule"/>
</dbReference>
<dbReference type="FunFam" id="3.90.1640.10:FF:000001">
    <property type="entry name" value="Probable manganese-dependent inorganic pyrophosphatase"/>
    <property type="match status" value="1"/>
</dbReference>
<dbReference type="Gene3D" id="3.10.310.20">
    <property type="entry name" value="DHHA2 domain"/>
    <property type="match status" value="1"/>
</dbReference>
<dbReference type="Gene3D" id="3.90.1640.10">
    <property type="entry name" value="inorganic pyrophosphatase (n-terminal core)"/>
    <property type="match status" value="1"/>
</dbReference>
<dbReference type="HAMAP" id="MF_00207">
    <property type="entry name" value="PPase_C"/>
    <property type="match status" value="1"/>
</dbReference>
<dbReference type="InterPro" id="IPR001667">
    <property type="entry name" value="DDH_dom"/>
</dbReference>
<dbReference type="InterPro" id="IPR038763">
    <property type="entry name" value="DHH_sf"/>
</dbReference>
<dbReference type="InterPro" id="IPR004097">
    <property type="entry name" value="DHHA2"/>
</dbReference>
<dbReference type="InterPro" id="IPR038222">
    <property type="entry name" value="DHHA2_dom_sf"/>
</dbReference>
<dbReference type="InterPro" id="IPR022934">
    <property type="entry name" value="Mn-dep_inorganic_PyrPase"/>
</dbReference>
<dbReference type="NCBIfam" id="NF003877">
    <property type="entry name" value="PRK05427.1"/>
    <property type="match status" value="1"/>
</dbReference>
<dbReference type="PANTHER" id="PTHR12112">
    <property type="entry name" value="BNIP - RELATED"/>
    <property type="match status" value="1"/>
</dbReference>
<dbReference type="PANTHER" id="PTHR12112:SF22">
    <property type="entry name" value="MANGANESE-DEPENDENT INORGANIC PYROPHOSPHATASE-RELATED"/>
    <property type="match status" value="1"/>
</dbReference>
<dbReference type="Pfam" id="PF01368">
    <property type="entry name" value="DHH"/>
    <property type="match status" value="1"/>
</dbReference>
<dbReference type="Pfam" id="PF02833">
    <property type="entry name" value="DHHA2"/>
    <property type="match status" value="1"/>
</dbReference>
<dbReference type="SMART" id="SM01131">
    <property type="entry name" value="DHHA2"/>
    <property type="match status" value="1"/>
</dbReference>
<dbReference type="SUPFAM" id="SSF64182">
    <property type="entry name" value="DHH phosphoesterases"/>
    <property type="match status" value="1"/>
</dbReference>
<protein>
    <recommendedName>
        <fullName>Probable manganese-dependent inorganic pyrophosphatase</fullName>
        <ecNumber>3.6.1.1</ecNumber>
    </recommendedName>
    <alternativeName>
        <fullName>Pyrophosphate phospho-hydrolase</fullName>
        <shortName>PPase</shortName>
    </alternativeName>
</protein>
<reference key="1">
    <citation type="journal article" date="1999" name="Science">
        <title>Genome sequence of the radioresistant bacterium Deinococcus radiodurans R1.</title>
        <authorList>
            <person name="White O."/>
            <person name="Eisen J.A."/>
            <person name="Heidelberg J.F."/>
            <person name="Hickey E.K."/>
            <person name="Peterson J.D."/>
            <person name="Dodson R.J."/>
            <person name="Haft D.H."/>
            <person name="Gwinn M.L."/>
            <person name="Nelson W.C."/>
            <person name="Richardson D.L."/>
            <person name="Moffat K.S."/>
            <person name="Qin H."/>
            <person name="Jiang L."/>
            <person name="Pamphile W."/>
            <person name="Crosby M."/>
            <person name="Shen M."/>
            <person name="Vamathevan J.J."/>
            <person name="Lam P."/>
            <person name="McDonald L.A."/>
            <person name="Utterback T.R."/>
            <person name="Zalewski C."/>
            <person name="Makarova K.S."/>
            <person name="Aravind L."/>
            <person name="Daly M.J."/>
            <person name="Minton K.W."/>
            <person name="Fleischmann R.D."/>
            <person name="Ketchum K.A."/>
            <person name="Nelson K.E."/>
            <person name="Salzberg S.L."/>
            <person name="Smith H.O."/>
            <person name="Venter J.C."/>
            <person name="Fraser C.M."/>
        </authorList>
    </citation>
    <scope>NUCLEOTIDE SEQUENCE [LARGE SCALE GENOMIC DNA]</scope>
    <source>
        <strain>ATCC 13939 / DSM 20539 / JCM 16871 / CCUG 27074 / LMG 4051 / NBRC 15346 / NCIMB 9279 / VKM B-1422 / R1</strain>
    </source>
</reference>
<reference key="2">
    <citation type="journal article" date="2004" name="Biochem. Biophys. Res. Commun.">
        <title>Protein recycling is a major component of post-irradiation recovery in Deinococcus radiodurans strain R1.</title>
        <authorList>
            <person name="Joshi B.S."/>
            <person name="Schmid R."/>
            <person name="Altendorf K."/>
            <person name="Apte S.K."/>
        </authorList>
    </citation>
    <scope>PROTEIN SEQUENCE OF 1-22</scope>
    <source>
        <strain>ATCC 13939 / DSM 20539 / JCM 16871 / CCUG 27074 / LMG 4051 / NBRC 15346 / NCIMB 9279 / VKM B-1422 / R1</strain>
    </source>
</reference>